<reference key="1">
    <citation type="journal article" date="1993" name="Genomics">
        <title>Molecular diversity of the SCG10/stathmin gene family in the mouse.</title>
        <authorList>
            <person name="Okazaki T."/>
            <person name="Yoshida B.N."/>
            <person name="Avraham K.B."/>
            <person name="Wang H."/>
            <person name="Wuenschell C.W."/>
            <person name="Jenkins N.A."/>
            <person name="Copeland N.G."/>
            <person name="Anderson D.J."/>
            <person name="Mori N."/>
        </authorList>
    </citation>
    <scope>NUCLEOTIDE SEQUENCE [GENOMIC DNA]</scope>
</reference>
<reference key="2">
    <citation type="journal article" date="1994" name="Genomics">
        <authorList>
            <person name="Okazaki T."/>
            <person name="Yoshida B.N."/>
            <person name="Avraham K.B."/>
            <person name="Wang H."/>
            <person name="Wuenschell C.W."/>
            <person name="Jenkins N.A."/>
            <person name="Copeland N.G."/>
            <person name="Anderson D.J."/>
            <person name="Mori N."/>
        </authorList>
    </citation>
    <scope>ERRATUM OF PUBMED:8288240</scope>
</reference>
<reference key="3">
    <citation type="journal article" date="1996" name="Cell Struct. Funct.">
        <title>Transcriptional and post-transcriptional regulation of pr22 (Op18) with proliferation control.</title>
        <authorList>
            <person name="Hosoya H."/>
            <person name="Ishikawa K."/>
            <person name="Dohi N."/>
            <person name="Marunouchi T."/>
        </authorList>
    </citation>
    <scope>NUCLEOTIDE SEQUENCE [MRNA]</scope>
    <source>
        <strain>C57BL/6J</strain>
    </source>
</reference>
<reference key="4">
    <citation type="journal article" date="2004" name="Genome Res.">
        <title>The status, quality, and expansion of the NIH full-length cDNA project: the Mammalian Gene Collection (MGC).</title>
        <authorList>
            <consortium name="The MGC Project Team"/>
        </authorList>
    </citation>
    <scope>NUCLEOTIDE SEQUENCE [LARGE SCALE MRNA]</scope>
    <source>
        <strain>129</strain>
        <tissue>Mammary gland</tissue>
        <tissue>Retina</tissue>
    </source>
</reference>
<reference key="5">
    <citation type="submission" date="2007-07" db="UniProtKB">
        <authorList>
            <person name="Lubec G."/>
            <person name="Klug S."/>
            <person name="Yang J.W."/>
            <person name="Zigmond M."/>
        </authorList>
    </citation>
    <scope>PROTEIN SEQUENCE OF 15-27</scope>
    <scope>IDENTIFICATION BY MASS SPECTROMETRY</scope>
    <source>
        <tissue>Brain</tissue>
        <tissue>Hippocampus</tissue>
    </source>
</reference>
<reference key="6">
    <citation type="journal article" date="1993" name="J. Biol. Chem.">
        <title>Multiple phosphorylation of stathmin. Identification of four sites phosphorylated in intact cells and in vitro by cyclic AMP-dependent protein kinase and p34cdc2.</title>
        <authorList>
            <person name="Beretta L."/>
            <person name="Dobransky T."/>
            <person name="Sobel A."/>
        </authorList>
    </citation>
    <scope>PHOSPHORYLATION AT SER-16; SER-25; SER-38 AND SER-63</scope>
</reference>
<reference key="7">
    <citation type="journal article" date="1995" name="Proc. Natl. Acad. Sci. U.S.A.">
        <title>Stathmin interaction with a putative kinase and coiled-coil-forming protein domains.</title>
        <authorList>
            <person name="Maucuer A."/>
            <person name="Camonis J.H."/>
            <person name="Sobel A."/>
        </authorList>
    </citation>
    <scope>INTERACTION WITH KIST</scope>
    <source>
        <tissue>Embryo</tissue>
    </source>
</reference>
<reference key="8">
    <citation type="journal article" date="2004" name="Mol. Cell. Proteomics">
        <title>Phosphoproteomic analysis of the developing mouse brain.</title>
        <authorList>
            <person name="Ballif B.A."/>
            <person name="Villen J."/>
            <person name="Beausoleil S.A."/>
            <person name="Schwartz D."/>
            <person name="Gygi S.P."/>
        </authorList>
    </citation>
    <scope>PHOSPHORYLATION [LARGE SCALE ANALYSIS] AT SER-25 AND SER-38</scope>
    <scope>IDENTIFICATION BY MASS SPECTROMETRY [LARGE SCALE ANALYSIS]</scope>
    <source>
        <tissue>Embryonic brain</tissue>
    </source>
</reference>
<reference key="9">
    <citation type="journal article" date="2005" name="Cell">
        <title>Stathmin, a gene enriched in the amygdala, controls both learned and innate fear.</title>
        <authorList>
            <person name="Shumyatsky G.P."/>
            <person name="Malleret G."/>
            <person name="Shin R.-M."/>
            <person name="Takizawa S."/>
            <person name="Tully K."/>
            <person name="Tsvetkov E."/>
            <person name="Zakharenko S.S."/>
            <person name="Joseph J."/>
            <person name="Vronskaya S."/>
            <person name="Yin D."/>
            <person name="Schubart U.K."/>
            <person name="Kandel E.R."/>
            <person name="Bolshakov V.Y."/>
        </authorList>
    </citation>
    <scope>FUNCTION IN CONTROL OF FEAR</scope>
    <scope>TISSUE SPECIFICITY</scope>
    <scope>DISRUPTION PHENOTYPE</scope>
</reference>
<reference key="10">
    <citation type="journal article" date="2007" name="Mol. Cell. Proteomics">
        <title>Qualitative and quantitative analyses of protein phosphorylation in naive and stimulated mouse synaptosomal preparations.</title>
        <authorList>
            <person name="Munton R.P."/>
            <person name="Tweedie-Cullen R."/>
            <person name="Livingstone-Zatchej M."/>
            <person name="Weinandy F."/>
            <person name="Waidelich M."/>
            <person name="Longo D."/>
            <person name="Gehrig P."/>
            <person name="Potthast F."/>
            <person name="Rutishauser D."/>
            <person name="Gerrits B."/>
            <person name="Panse C."/>
            <person name="Schlapbach R."/>
            <person name="Mansuy I.M."/>
        </authorList>
    </citation>
    <scope>IDENTIFICATION BY MASS SPECTROMETRY [LARGE SCALE ANALYSIS]</scope>
    <source>
        <tissue>Brain cortex</tissue>
    </source>
</reference>
<reference key="11">
    <citation type="journal article" date="2007" name="Proc. Natl. Acad. Sci. U.S.A.">
        <title>Large-scale phosphorylation analysis of mouse liver.</title>
        <authorList>
            <person name="Villen J."/>
            <person name="Beausoleil S.A."/>
            <person name="Gerber S.A."/>
            <person name="Gygi S.P."/>
        </authorList>
    </citation>
    <scope>PHOSPHORYLATION [LARGE SCALE ANALYSIS] AT SER-16</scope>
    <scope>IDENTIFICATION BY MASS SPECTROMETRY [LARGE SCALE ANALYSIS]</scope>
    <source>
        <tissue>Liver</tissue>
    </source>
</reference>
<reference key="12">
    <citation type="journal article" date="2009" name="Mol. Cell. Proteomics">
        <title>Large scale localization of protein phosphorylation by use of electron capture dissociation mass spectrometry.</title>
        <authorList>
            <person name="Sweet S.M."/>
            <person name="Bailey C.M."/>
            <person name="Cunningham D.L."/>
            <person name="Heath J.K."/>
            <person name="Cooper H.J."/>
        </authorList>
    </citation>
    <scope>PHOSPHORYLATION [LARGE SCALE ANALYSIS] AT SER-16</scope>
    <scope>IDENTIFICATION BY MASS SPECTROMETRY [LARGE SCALE ANALYSIS]</scope>
    <source>
        <tissue>Embryonic fibroblast</tissue>
    </source>
</reference>
<reference key="13">
    <citation type="journal article" date="2010" name="Cell">
        <title>A tissue-specific atlas of mouse protein phosphorylation and expression.</title>
        <authorList>
            <person name="Huttlin E.L."/>
            <person name="Jedrychowski M.P."/>
            <person name="Elias J.E."/>
            <person name="Goswami T."/>
            <person name="Rad R."/>
            <person name="Beausoleil S.A."/>
            <person name="Villen J."/>
            <person name="Haas W."/>
            <person name="Sowa M.E."/>
            <person name="Gygi S.P."/>
        </authorList>
    </citation>
    <scope>PHOSPHORYLATION [LARGE SCALE ANALYSIS] AT SER-16; SER-25 AND SER-38</scope>
    <scope>IDENTIFICATION BY MASS SPECTROMETRY [LARGE SCALE ANALYSIS]</scope>
    <source>
        <tissue>Brain</tissue>
        <tissue>Brown adipose tissue</tissue>
        <tissue>Heart</tissue>
        <tissue>Kidney</tissue>
        <tissue>Liver</tissue>
        <tissue>Lung</tissue>
        <tissue>Pancreas</tissue>
        <tissue>Spleen</tissue>
        <tissue>Testis</tissue>
    </source>
</reference>
<reference key="14">
    <citation type="journal article" date="2013" name="Mol. Cell">
        <title>SIRT5-mediated lysine desuccinylation impacts diverse metabolic pathways.</title>
        <authorList>
            <person name="Park J."/>
            <person name="Chen Y."/>
            <person name="Tishkoff D.X."/>
            <person name="Peng C."/>
            <person name="Tan M."/>
            <person name="Dai L."/>
            <person name="Xie Z."/>
            <person name="Zhang Y."/>
            <person name="Zwaans B.M."/>
            <person name="Skinner M.E."/>
            <person name="Lombard D.B."/>
            <person name="Zhao Y."/>
        </authorList>
    </citation>
    <scope>ACETYLATION [LARGE SCALE ANALYSIS] AT LYS-119</scope>
    <scope>IDENTIFICATION BY MASS SPECTROMETRY [LARGE SCALE ANALYSIS]</scope>
    <source>
        <tissue>Embryonic fibroblast</tissue>
    </source>
</reference>
<feature type="initiator methionine" description="Removed" evidence="2">
    <location>
        <position position="1"/>
    </location>
</feature>
<feature type="chain" id="PRO_0000182390" description="Stathmin">
    <location>
        <begin position="2"/>
        <end position="149"/>
    </location>
</feature>
<feature type="domain" description="SLD" evidence="4">
    <location>
        <begin position="4"/>
        <end position="145"/>
    </location>
</feature>
<feature type="region of interest" description="Disordered" evidence="5">
    <location>
        <begin position="27"/>
        <end position="46"/>
    </location>
</feature>
<feature type="region of interest" description="Disordered" evidence="5">
    <location>
        <begin position="104"/>
        <end position="149"/>
    </location>
</feature>
<feature type="coiled-coil region" evidence="3">
    <location>
        <begin position="41"/>
        <end position="140"/>
    </location>
</feature>
<feature type="compositionally biased region" description="Basic and acidic residues" evidence="5">
    <location>
        <begin position="104"/>
        <end position="143"/>
    </location>
</feature>
<feature type="modified residue" description="N-acetylalanine" evidence="2">
    <location>
        <position position="2"/>
    </location>
</feature>
<feature type="modified residue" description="Phosphoserine" evidence="2">
    <location>
        <position position="4"/>
    </location>
</feature>
<feature type="modified residue" description="N6-acetyllysine" evidence="2">
    <location>
        <position position="9"/>
    </location>
</feature>
<feature type="modified residue" description="Phosphoserine; by PKA" evidence="8 11 12 13">
    <location>
        <position position="16"/>
    </location>
</feature>
<feature type="modified residue" description="Phosphoserine; by CDK1, MAPK1 and MAPK3" evidence="8 10 13">
    <location>
        <position position="25"/>
    </location>
</feature>
<feature type="modified residue" description="N6-methyllysine" evidence="2">
    <location>
        <position position="29"/>
    </location>
</feature>
<feature type="modified residue" description="Phosphoserine" evidence="2">
    <location>
        <position position="31"/>
    </location>
</feature>
<feature type="modified residue" description="Phosphoserine; by CDK1, MAPK1 and MAPK3" evidence="8 10 13">
    <location>
        <position position="38"/>
    </location>
</feature>
<feature type="modified residue" description="Phosphoserine; by PKA" evidence="8">
    <location>
        <position position="63"/>
    </location>
</feature>
<feature type="modified residue" description="N6-acetyllysine" evidence="2">
    <location>
        <position position="100"/>
    </location>
</feature>
<feature type="modified residue" description="N6-acetyllysine" evidence="14">
    <location>
        <position position="119"/>
    </location>
</feature>
<accession>P54227</accession>
<name>STMN1_MOUSE</name>
<keyword id="KW-0007">Acetylation</keyword>
<keyword id="KW-0175">Coiled coil</keyword>
<keyword id="KW-0963">Cytoplasm</keyword>
<keyword id="KW-0206">Cytoskeleton</keyword>
<keyword id="KW-0217">Developmental protein</keyword>
<keyword id="KW-0221">Differentiation</keyword>
<keyword id="KW-0903">Direct protein sequencing</keyword>
<keyword id="KW-0488">Methylation</keyword>
<keyword id="KW-0493">Microtubule</keyword>
<keyword id="KW-0524">Neurogenesis</keyword>
<keyword id="KW-0597">Phosphoprotein</keyword>
<keyword id="KW-1185">Reference proteome</keyword>
<organism>
    <name type="scientific">Mus musculus</name>
    <name type="common">Mouse</name>
    <dbReference type="NCBI Taxonomy" id="10090"/>
    <lineage>
        <taxon>Eukaryota</taxon>
        <taxon>Metazoa</taxon>
        <taxon>Chordata</taxon>
        <taxon>Craniata</taxon>
        <taxon>Vertebrata</taxon>
        <taxon>Euteleostomi</taxon>
        <taxon>Mammalia</taxon>
        <taxon>Eutheria</taxon>
        <taxon>Euarchontoglires</taxon>
        <taxon>Glires</taxon>
        <taxon>Rodentia</taxon>
        <taxon>Myomorpha</taxon>
        <taxon>Muroidea</taxon>
        <taxon>Muridae</taxon>
        <taxon>Murinae</taxon>
        <taxon>Mus</taxon>
        <taxon>Mus</taxon>
    </lineage>
</organism>
<evidence type="ECO:0000250" key="1"/>
<evidence type="ECO:0000250" key="2">
    <source>
        <dbReference type="UniProtKB" id="P16949"/>
    </source>
</evidence>
<evidence type="ECO:0000255" key="3"/>
<evidence type="ECO:0000255" key="4">
    <source>
        <dbReference type="PROSITE-ProRule" id="PRU00998"/>
    </source>
</evidence>
<evidence type="ECO:0000256" key="5">
    <source>
        <dbReference type="SAM" id="MobiDB-lite"/>
    </source>
</evidence>
<evidence type="ECO:0000269" key="6">
    <source>
    </source>
</evidence>
<evidence type="ECO:0000269" key="7">
    <source>
    </source>
</evidence>
<evidence type="ECO:0000269" key="8">
    <source>
    </source>
</evidence>
<evidence type="ECO:0000305" key="9"/>
<evidence type="ECO:0007744" key="10">
    <source>
    </source>
</evidence>
<evidence type="ECO:0007744" key="11">
    <source>
    </source>
</evidence>
<evidence type="ECO:0007744" key="12">
    <source>
    </source>
</evidence>
<evidence type="ECO:0007744" key="13">
    <source>
    </source>
</evidence>
<evidence type="ECO:0007744" key="14">
    <source>
    </source>
</evidence>
<sequence>MASSDIQVKELEKRASGQAFELILSPRSKESVPDFPLSPPKKKDLSLEEIQKKLEAAEERRKSHEAEVLKQLAEKREHEKEVLQKAIEENNNFSKMAEEKLTHKMEANKENREAQMAAKLERLREKDKHVEEVRKNKESKDPADETEAD</sequence>
<proteinExistence type="evidence at protein level"/>
<dbReference type="EMBL" id="L20256">
    <property type="status" value="NOT_ANNOTATED_CDS"/>
    <property type="molecule type" value="Genomic_DNA"/>
</dbReference>
<dbReference type="EMBL" id="L20257">
    <property type="status" value="NOT_ANNOTATED_CDS"/>
    <property type="molecule type" value="Genomic_DNA"/>
</dbReference>
<dbReference type="EMBL" id="L20258">
    <property type="status" value="NOT_ANNOTATED_CDS"/>
    <property type="molecule type" value="Genomic_DNA"/>
</dbReference>
<dbReference type="EMBL" id="X94915">
    <property type="protein sequence ID" value="CAA64401.1"/>
    <property type="molecule type" value="mRNA"/>
</dbReference>
<dbReference type="EMBL" id="BC010581">
    <property type="protein sequence ID" value="AAH10581.1"/>
    <property type="molecule type" value="mRNA"/>
</dbReference>
<dbReference type="EMBL" id="BC031831">
    <property type="protein sequence ID" value="AAH31831.1"/>
    <property type="molecule type" value="mRNA"/>
</dbReference>
<dbReference type="EMBL" id="BC054396">
    <property type="protein sequence ID" value="AAH54396.1"/>
    <property type="molecule type" value="mRNA"/>
</dbReference>
<dbReference type="CCDS" id="CCDS18772.1"/>
<dbReference type="PIR" id="B48917">
    <property type="entry name" value="B48917"/>
</dbReference>
<dbReference type="RefSeq" id="NP_001416805.1">
    <property type="nucleotide sequence ID" value="NM_001429876.1"/>
</dbReference>
<dbReference type="RefSeq" id="NP_062615.1">
    <property type="nucleotide sequence ID" value="NM_019641.5"/>
</dbReference>
<dbReference type="SMR" id="P54227"/>
<dbReference type="BioGRID" id="201092">
    <property type="interactions" value="27"/>
</dbReference>
<dbReference type="FunCoup" id="P54227">
    <property type="interactions" value="1281"/>
</dbReference>
<dbReference type="IntAct" id="P54227">
    <property type="interactions" value="10"/>
</dbReference>
<dbReference type="STRING" id="10090.ENSMUSP00000030636"/>
<dbReference type="GlyGen" id="P54227">
    <property type="glycosylation" value="2 sites, 1 N-linked glycan (1 site), 1 O-linked glycan (1 site)"/>
</dbReference>
<dbReference type="iPTMnet" id="P54227"/>
<dbReference type="PhosphoSitePlus" id="P54227"/>
<dbReference type="SwissPalm" id="P54227"/>
<dbReference type="REPRODUCTION-2DPAGE" id="P54227"/>
<dbReference type="jPOST" id="P54227"/>
<dbReference type="PaxDb" id="10090-ENSMUSP00000030636"/>
<dbReference type="PeptideAtlas" id="P54227"/>
<dbReference type="ProteomicsDB" id="257456"/>
<dbReference type="Pumba" id="P54227"/>
<dbReference type="Antibodypedia" id="4112">
    <property type="antibodies" value="1491 antibodies from 46 providers"/>
</dbReference>
<dbReference type="DNASU" id="16765"/>
<dbReference type="Ensembl" id="ENSMUST00000030636.11">
    <property type="protein sequence ID" value="ENSMUSP00000030636.5"/>
    <property type="gene ID" value="ENSMUSG00000028832.12"/>
</dbReference>
<dbReference type="Ensembl" id="ENSMUST00000105868.2">
    <property type="protein sequence ID" value="ENSMUSP00000101494.2"/>
    <property type="gene ID" value="ENSMUSG00000028832.12"/>
</dbReference>
<dbReference type="GeneID" id="16765"/>
<dbReference type="KEGG" id="mmu:16765"/>
<dbReference type="UCSC" id="uc008vfc.2">
    <property type="organism name" value="mouse"/>
</dbReference>
<dbReference type="AGR" id="MGI:96739"/>
<dbReference type="CTD" id="3925"/>
<dbReference type="MGI" id="MGI:96739">
    <property type="gene designation" value="Stmn1"/>
</dbReference>
<dbReference type="VEuPathDB" id="HostDB:ENSMUSG00000028832"/>
<dbReference type="eggNOG" id="KOG1280">
    <property type="taxonomic scope" value="Eukaryota"/>
</dbReference>
<dbReference type="GeneTree" id="ENSGT01030000234597"/>
<dbReference type="InParanoid" id="P54227"/>
<dbReference type="OMA" id="RKSHEAM"/>
<dbReference type="OrthoDB" id="5986631at2759"/>
<dbReference type="PhylomeDB" id="P54227"/>
<dbReference type="TreeFam" id="TF326935"/>
<dbReference type="BioGRID-ORCS" id="16765">
    <property type="hits" value="6 hits in 79 CRISPR screens"/>
</dbReference>
<dbReference type="ChiTaRS" id="Stmn1">
    <property type="organism name" value="mouse"/>
</dbReference>
<dbReference type="PRO" id="PR:P54227"/>
<dbReference type="Proteomes" id="UP000000589">
    <property type="component" value="Chromosome 4"/>
</dbReference>
<dbReference type="RNAct" id="P54227">
    <property type="molecule type" value="protein"/>
</dbReference>
<dbReference type="Bgee" id="ENSMUSG00000028832">
    <property type="expression patterns" value="Expressed in cortical plate and 93 other cell types or tissues"/>
</dbReference>
<dbReference type="ExpressionAtlas" id="P54227">
    <property type="expression patterns" value="baseline and differential"/>
</dbReference>
<dbReference type="GO" id="GO:0005737">
    <property type="term" value="C:cytoplasm"/>
    <property type="evidence" value="ECO:0000314"/>
    <property type="project" value="MGI"/>
</dbReference>
<dbReference type="GO" id="GO:0005829">
    <property type="term" value="C:cytosol"/>
    <property type="evidence" value="ECO:0000314"/>
    <property type="project" value="MGI"/>
</dbReference>
<dbReference type="GO" id="GO:0016020">
    <property type="term" value="C:membrane"/>
    <property type="evidence" value="ECO:0000314"/>
    <property type="project" value="MGI"/>
</dbReference>
<dbReference type="GO" id="GO:0005874">
    <property type="term" value="C:microtubule"/>
    <property type="evidence" value="ECO:0007669"/>
    <property type="project" value="UniProtKB-KW"/>
</dbReference>
<dbReference type="GO" id="GO:0015631">
    <property type="term" value="F:tubulin binding"/>
    <property type="evidence" value="ECO:0000266"/>
    <property type="project" value="MGI"/>
</dbReference>
<dbReference type="GO" id="GO:0007409">
    <property type="term" value="P:axonogenesis"/>
    <property type="evidence" value="ECO:0000315"/>
    <property type="project" value="MGI"/>
</dbReference>
<dbReference type="GO" id="GO:0061436">
    <property type="term" value="P:establishment of skin barrier"/>
    <property type="evidence" value="ECO:0007669"/>
    <property type="project" value="Ensembl"/>
</dbReference>
<dbReference type="GO" id="GO:0048012">
    <property type="term" value="P:hepatocyte growth factor receptor signaling pathway"/>
    <property type="evidence" value="ECO:0007669"/>
    <property type="project" value="Ensembl"/>
</dbReference>
<dbReference type="GO" id="GO:0007019">
    <property type="term" value="P:microtubule depolymerization"/>
    <property type="evidence" value="ECO:0000266"/>
    <property type="project" value="MGI"/>
</dbReference>
<dbReference type="GO" id="GO:0000281">
    <property type="term" value="P:mitotic cytokinesis"/>
    <property type="evidence" value="ECO:0000316"/>
    <property type="project" value="MGI"/>
</dbReference>
<dbReference type="GO" id="GO:0007052">
    <property type="term" value="P:mitotic spindle organization"/>
    <property type="evidence" value="ECO:0000266"/>
    <property type="project" value="MGI"/>
</dbReference>
<dbReference type="GO" id="GO:0031115">
    <property type="term" value="P:negative regulation of microtubule polymerization"/>
    <property type="evidence" value="ECO:0000314"/>
    <property type="project" value="MGI"/>
</dbReference>
<dbReference type="GO" id="GO:0035024">
    <property type="term" value="P:negative regulation of Rho protein signal transduction"/>
    <property type="evidence" value="ECO:0007669"/>
    <property type="project" value="Ensembl"/>
</dbReference>
<dbReference type="GO" id="GO:0051497">
    <property type="term" value="P:negative regulation of stress fiber assembly"/>
    <property type="evidence" value="ECO:0007669"/>
    <property type="project" value="Ensembl"/>
</dbReference>
<dbReference type="GO" id="GO:0070495">
    <property type="term" value="P:negative regulation of thrombin-activated receptor signaling pathway"/>
    <property type="evidence" value="ECO:0007669"/>
    <property type="project" value="Ensembl"/>
</dbReference>
<dbReference type="GO" id="GO:0030334">
    <property type="term" value="P:regulation of cell migration"/>
    <property type="evidence" value="ECO:0000316"/>
    <property type="project" value="MGI"/>
</dbReference>
<dbReference type="GO" id="GO:0009615">
    <property type="term" value="P:response to virus"/>
    <property type="evidence" value="ECO:0007669"/>
    <property type="project" value="Ensembl"/>
</dbReference>
<dbReference type="Gene3D" id="6.10.280.30">
    <property type="match status" value="1"/>
</dbReference>
<dbReference type="InterPro" id="IPR030514">
    <property type="entry name" value="Stathmin_CS"/>
</dbReference>
<dbReference type="InterPro" id="IPR000956">
    <property type="entry name" value="Stathmin_fam"/>
</dbReference>
<dbReference type="InterPro" id="IPR036002">
    <property type="entry name" value="Stathmin_sf"/>
</dbReference>
<dbReference type="PANTHER" id="PTHR10104">
    <property type="entry name" value="STATHMIN"/>
    <property type="match status" value="1"/>
</dbReference>
<dbReference type="PANTHER" id="PTHR10104:SF5">
    <property type="entry name" value="STATHMIN"/>
    <property type="match status" value="1"/>
</dbReference>
<dbReference type="Pfam" id="PF00836">
    <property type="entry name" value="Stathmin"/>
    <property type="match status" value="1"/>
</dbReference>
<dbReference type="PIRSF" id="PIRSF002285">
    <property type="entry name" value="Stathmin"/>
    <property type="match status" value="1"/>
</dbReference>
<dbReference type="PRINTS" id="PR00345">
    <property type="entry name" value="STATHMIN"/>
</dbReference>
<dbReference type="SUPFAM" id="SSF101494">
    <property type="entry name" value="Stathmin"/>
    <property type="match status" value="1"/>
</dbReference>
<dbReference type="PROSITE" id="PS00563">
    <property type="entry name" value="STATHMIN_1"/>
    <property type="match status" value="1"/>
</dbReference>
<dbReference type="PROSITE" id="PS01041">
    <property type="entry name" value="STATHMIN_2"/>
    <property type="match status" value="1"/>
</dbReference>
<dbReference type="PROSITE" id="PS51663">
    <property type="entry name" value="STATHMIN_3"/>
    <property type="match status" value="1"/>
</dbReference>
<comment type="function">
    <text evidence="1 6">Involved in the regulation of the microtubule (MT) filament system by destabilizing microtubules. Prevents assembly and promotes disassembly of microtubules. Phosphorylation at Ser-16 may be required for axon formation during neurogenesis (By similarity). Involved in the control of the learned and innate fear.</text>
</comment>
<comment type="subunit">
    <text evidence="7">Binds to two alpha/beta-tubulin heterodimers. Interacts with KIST.</text>
</comment>
<comment type="interaction">
    <interactant intactId="EBI-1006438">
        <id>P54227</id>
    </interactant>
    <interactant intactId="EBI-1005742">
        <id>P46414</id>
        <label>Cdkn1b</label>
    </interactant>
    <organismsDiffer>false</organismsDiffer>
    <experiments>2</experiments>
</comment>
<comment type="subcellular location">
    <subcellularLocation>
        <location>Cytoplasm</location>
        <location>Cytoskeleton</location>
    </subcellularLocation>
</comment>
<comment type="tissue specificity">
    <text evidence="6">Highly expressed in the lateral nucleus of the amygdala.</text>
</comment>
<comment type="PTM">
    <text evidence="1 9">Many different phosphorylated forms are observed depending on specific combinations among the sites which can be phosphorylated. MAPK is responsible for the phosphorylation of stathmin in response to NGF (Probable). Phosphorylation at Ser-16 seems to be required for neuron polarization (By similarity).</text>
</comment>
<comment type="disruption phenotype">
    <text evidence="6">Mice show deficits in spike-timing-dependent long-term potentiation, exhibit decreased memory in amygdala-dependent fear conditioning and fail to recognize danger in innately aversive environments.</text>
</comment>
<comment type="similarity">
    <text evidence="9">Belongs to the stathmin family.</text>
</comment>
<protein>
    <recommendedName>
        <fullName>Stathmin</fullName>
    </recommendedName>
    <alternativeName>
        <fullName>Leukemia-associated gene protein</fullName>
    </alternativeName>
    <alternativeName>
        <fullName>Leukemia-associated phosphoprotein p18</fullName>
    </alternativeName>
    <alternativeName>
        <fullName>Metablastin</fullName>
    </alternativeName>
    <alternativeName>
        <fullName>Oncoprotein 18</fullName>
        <shortName>Op18</shortName>
    </alternativeName>
    <alternativeName>
        <fullName>Phosphoprotein p19</fullName>
        <shortName>pp19</shortName>
    </alternativeName>
    <alternativeName>
        <fullName>Prosolin</fullName>
    </alternativeName>
    <alternativeName>
        <fullName>Protein Pr22</fullName>
    </alternativeName>
    <alternativeName>
        <fullName>pp17</fullName>
    </alternativeName>
</protein>
<gene>
    <name type="primary">Stmn1</name>
    <name type="synonym">Lag</name>
    <name type="synonym">Lap18</name>
    <name type="synonym">Pr22</name>
</gene>